<evidence type="ECO:0000255" key="1">
    <source>
        <dbReference type="HAMAP-Rule" id="MF_00281"/>
    </source>
</evidence>
<accession>B3EEB7</accession>
<gene>
    <name evidence="1" type="primary">pheS</name>
    <name type="ordered locus">Clim_0152</name>
</gene>
<name>SYFA_CHLL2</name>
<sequence length="341" mass="38594">MEEAIRSLQQEISDFGIQSNKDLEAFRLKYTVRKGLIADLFGQLKTVAPDERPRIGQLLNTLKKNADEKQTAAEAVFSAQAARKAPALDLTLPGRRHYTGSEHPVQKVLGDMKQIFHAMGFSIATGPELELDRYNFDLLNFPPDHPARDMQDTFFITRGNPSGDVLLRTHTSPVQVRVMLDNPPPIRVICPGKVYRNEAISSRSYCVFHQLEGLYIDKNVSFADLKATIFSFARQMFGKDVKLRFRPSFFPFTEPSAEVDVTCYLCGGKGCRVCKKSGWLEIMGCGMVHPNVMRDCGIDPEVWSGYAFGMGVDRTVLLRYKIDDIRLLFENDIRMLRQFPA</sequence>
<reference key="1">
    <citation type="submission" date="2008-05" db="EMBL/GenBank/DDBJ databases">
        <title>Complete sequence of Chlorobium limicola DSM 245.</title>
        <authorList>
            <consortium name="US DOE Joint Genome Institute"/>
            <person name="Lucas S."/>
            <person name="Copeland A."/>
            <person name="Lapidus A."/>
            <person name="Glavina del Rio T."/>
            <person name="Dalin E."/>
            <person name="Tice H."/>
            <person name="Bruce D."/>
            <person name="Goodwin L."/>
            <person name="Pitluck S."/>
            <person name="Schmutz J."/>
            <person name="Larimer F."/>
            <person name="Land M."/>
            <person name="Hauser L."/>
            <person name="Kyrpides N."/>
            <person name="Ovchinnikova G."/>
            <person name="Zhao F."/>
            <person name="Li T."/>
            <person name="Liu Z."/>
            <person name="Overmann J."/>
            <person name="Bryant D.A."/>
            <person name="Richardson P."/>
        </authorList>
    </citation>
    <scope>NUCLEOTIDE SEQUENCE [LARGE SCALE GENOMIC DNA]</scope>
    <source>
        <strain>DSM 245 / NBRC 103803 / 6330</strain>
    </source>
</reference>
<dbReference type="EC" id="6.1.1.20" evidence="1"/>
<dbReference type="EMBL" id="CP001097">
    <property type="protein sequence ID" value="ACD89251.1"/>
    <property type="molecule type" value="Genomic_DNA"/>
</dbReference>
<dbReference type="RefSeq" id="WP_012465132.1">
    <property type="nucleotide sequence ID" value="NC_010803.1"/>
</dbReference>
<dbReference type="SMR" id="B3EEB7"/>
<dbReference type="STRING" id="290315.Clim_0152"/>
<dbReference type="KEGG" id="cli:Clim_0152"/>
<dbReference type="eggNOG" id="COG0016">
    <property type="taxonomic scope" value="Bacteria"/>
</dbReference>
<dbReference type="HOGENOM" id="CLU_025086_0_1_10"/>
<dbReference type="OrthoDB" id="9800719at2"/>
<dbReference type="Proteomes" id="UP000008841">
    <property type="component" value="Chromosome"/>
</dbReference>
<dbReference type="GO" id="GO:0005737">
    <property type="term" value="C:cytoplasm"/>
    <property type="evidence" value="ECO:0007669"/>
    <property type="project" value="UniProtKB-SubCell"/>
</dbReference>
<dbReference type="GO" id="GO:0005524">
    <property type="term" value="F:ATP binding"/>
    <property type="evidence" value="ECO:0007669"/>
    <property type="project" value="UniProtKB-UniRule"/>
</dbReference>
<dbReference type="GO" id="GO:0000287">
    <property type="term" value="F:magnesium ion binding"/>
    <property type="evidence" value="ECO:0007669"/>
    <property type="project" value="UniProtKB-UniRule"/>
</dbReference>
<dbReference type="GO" id="GO:0004826">
    <property type="term" value="F:phenylalanine-tRNA ligase activity"/>
    <property type="evidence" value="ECO:0007669"/>
    <property type="project" value="UniProtKB-UniRule"/>
</dbReference>
<dbReference type="GO" id="GO:0000049">
    <property type="term" value="F:tRNA binding"/>
    <property type="evidence" value="ECO:0007669"/>
    <property type="project" value="InterPro"/>
</dbReference>
<dbReference type="GO" id="GO:0006432">
    <property type="term" value="P:phenylalanyl-tRNA aminoacylation"/>
    <property type="evidence" value="ECO:0007669"/>
    <property type="project" value="UniProtKB-UniRule"/>
</dbReference>
<dbReference type="CDD" id="cd00496">
    <property type="entry name" value="PheRS_alpha_core"/>
    <property type="match status" value="1"/>
</dbReference>
<dbReference type="Gene3D" id="3.30.930.10">
    <property type="entry name" value="Bira Bifunctional Protein, Domain 2"/>
    <property type="match status" value="1"/>
</dbReference>
<dbReference type="HAMAP" id="MF_00281">
    <property type="entry name" value="Phe_tRNA_synth_alpha1"/>
    <property type="match status" value="1"/>
</dbReference>
<dbReference type="InterPro" id="IPR006195">
    <property type="entry name" value="aa-tRNA-synth_II"/>
</dbReference>
<dbReference type="InterPro" id="IPR045864">
    <property type="entry name" value="aa-tRNA-synth_II/BPL/LPL"/>
</dbReference>
<dbReference type="InterPro" id="IPR004529">
    <property type="entry name" value="Phe-tRNA-synth_IIc_asu"/>
</dbReference>
<dbReference type="InterPro" id="IPR004188">
    <property type="entry name" value="Phe-tRNA_ligase_II_N"/>
</dbReference>
<dbReference type="InterPro" id="IPR022911">
    <property type="entry name" value="Phe_tRNA_ligase_alpha1_bac"/>
</dbReference>
<dbReference type="InterPro" id="IPR002319">
    <property type="entry name" value="Phenylalanyl-tRNA_Synthase"/>
</dbReference>
<dbReference type="InterPro" id="IPR010978">
    <property type="entry name" value="tRNA-bd_arm"/>
</dbReference>
<dbReference type="NCBIfam" id="TIGR00468">
    <property type="entry name" value="pheS"/>
    <property type="match status" value="1"/>
</dbReference>
<dbReference type="PANTHER" id="PTHR11538:SF41">
    <property type="entry name" value="PHENYLALANINE--TRNA LIGASE, MITOCHONDRIAL"/>
    <property type="match status" value="1"/>
</dbReference>
<dbReference type="PANTHER" id="PTHR11538">
    <property type="entry name" value="PHENYLALANYL-TRNA SYNTHETASE"/>
    <property type="match status" value="1"/>
</dbReference>
<dbReference type="Pfam" id="PF02912">
    <property type="entry name" value="Phe_tRNA-synt_N"/>
    <property type="match status" value="1"/>
</dbReference>
<dbReference type="Pfam" id="PF01409">
    <property type="entry name" value="tRNA-synt_2d"/>
    <property type="match status" value="1"/>
</dbReference>
<dbReference type="SUPFAM" id="SSF55681">
    <property type="entry name" value="Class II aaRS and biotin synthetases"/>
    <property type="match status" value="1"/>
</dbReference>
<dbReference type="SUPFAM" id="SSF46589">
    <property type="entry name" value="tRNA-binding arm"/>
    <property type="match status" value="1"/>
</dbReference>
<dbReference type="PROSITE" id="PS50862">
    <property type="entry name" value="AA_TRNA_LIGASE_II"/>
    <property type="match status" value="1"/>
</dbReference>
<keyword id="KW-0030">Aminoacyl-tRNA synthetase</keyword>
<keyword id="KW-0067">ATP-binding</keyword>
<keyword id="KW-0963">Cytoplasm</keyword>
<keyword id="KW-0436">Ligase</keyword>
<keyword id="KW-0460">Magnesium</keyword>
<keyword id="KW-0479">Metal-binding</keyword>
<keyword id="KW-0547">Nucleotide-binding</keyword>
<keyword id="KW-0648">Protein biosynthesis</keyword>
<organism>
    <name type="scientific">Chlorobium limicola (strain DSM 245 / NBRC 103803 / 6330)</name>
    <dbReference type="NCBI Taxonomy" id="290315"/>
    <lineage>
        <taxon>Bacteria</taxon>
        <taxon>Pseudomonadati</taxon>
        <taxon>Chlorobiota</taxon>
        <taxon>Chlorobiia</taxon>
        <taxon>Chlorobiales</taxon>
        <taxon>Chlorobiaceae</taxon>
        <taxon>Chlorobium/Pelodictyon group</taxon>
        <taxon>Chlorobium</taxon>
    </lineage>
</organism>
<proteinExistence type="inferred from homology"/>
<comment type="catalytic activity">
    <reaction evidence="1">
        <text>tRNA(Phe) + L-phenylalanine + ATP = L-phenylalanyl-tRNA(Phe) + AMP + diphosphate + H(+)</text>
        <dbReference type="Rhea" id="RHEA:19413"/>
        <dbReference type="Rhea" id="RHEA-COMP:9668"/>
        <dbReference type="Rhea" id="RHEA-COMP:9699"/>
        <dbReference type="ChEBI" id="CHEBI:15378"/>
        <dbReference type="ChEBI" id="CHEBI:30616"/>
        <dbReference type="ChEBI" id="CHEBI:33019"/>
        <dbReference type="ChEBI" id="CHEBI:58095"/>
        <dbReference type="ChEBI" id="CHEBI:78442"/>
        <dbReference type="ChEBI" id="CHEBI:78531"/>
        <dbReference type="ChEBI" id="CHEBI:456215"/>
        <dbReference type="EC" id="6.1.1.20"/>
    </reaction>
</comment>
<comment type="cofactor">
    <cofactor evidence="1">
        <name>Mg(2+)</name>
        <dbReference type="ChEBI" id="CHEBI:18420"/>
    </cofactor>
    <text evidence="1">Binds 2 magnesium ions per tetramer.</text>
</comment>
<comment type="subunit">
    <text evidence="1">Tetramer of two alpha and two beta subunits.</text>
</comment>
<comment type="subcellular location">
    <subcellularLocation>
        <location evidence="1">Cytoplasm</location>
    </subcellularLocation>
</comment>
<comment type="similarity">
    <text evidence="1">Belongs to the class-II aminoacyl-tRNA synthetase family. Phe-tRNA synthetase alpha subunit type 1 subfamily.</text>
</comment>
<feature type="chain" id="PRO_1000114854" description="Phenylalanine--tRNA ligase alpha subunit">
    <location>
        <begin position="1"/>
        <end position="341"/>
    </location>
</feature>
<feature type="binding site" evidence="1">
    <location>
        <position position="254"/>
    </location>
    <ligand>
        <name>Mg(2+)</name>
        <dbReference type="ChEBI" id="CHEBI:18420"/>
        <note>shared with beta subunit</note>
    </ligand>
</feature>
<protein>
    <recommendedName>
        <fullName evidence="1">Phenylalanine--tRNA ligase alpha subunit</fullName>
        <ecNumber evidence="1">6.1.1.20</ecNumber>
    </recommendedName>
    <alternativeName>
        <fullName evidence="1">Phenylalanyl-tRNA synthetase alpha subunit</fullName>
        <shortName evidence="1">PheRS</shortName>
    </alternativeName>
</protein>